<comment type="function">
    <text evidence="1">Catalyzes the radical-mediated insertion of two sulfur atoms into the C-6 and C-8 positions of the octanoyl moiety bound to the lipoyl domains of lipoate-dependent enzymes, thereby converting the octanoylated domains into lipoylated derivatives.</text>
</comment>
<comment type="catalytic activity">
    <reaction evidence="1">
        <text>[[Fe-S] cluster scaffold protein carrying a second [4Fe-4S](2+) cluster] + N(6)-octanoyl-L-lysyl-[protein] + 2 oxidized [2Fe-2S]-[ferredoxin] + 2 S-adenosyl-L-methionine + 4 H(+) = [[Fe-S] cluster scaffold protein] + N(6)-[(R)-dihydrolipoyl]-L-lysyl-[protein] + 4 Fe(3+) + 2 hydrogen sulfide + 2 5'-deoxyadenosine + 2 L-methionine + 2 reduced [2Fe-2S]-[ferredoxin]</text>
        <dbReference type="Rhea" id="RHEA:16585"/>
        <dbReference type="Rhea" id="RHEA-COMP:9928"/>
        <dbReference type="Rhea" id="RHEA-COMP:10000"/>
        <dbReference type="Rhea" id="RHEA-COMP:10001"/>
        <dbReference type="Rhea" id="RHEA-COMP:10475"/>
        <dbReference type="Rhea" id="RHEA-COMP:14568"/>
        <dbReference type="Rhea" id="RHEA-COMP:14569"/>
        <dbReference type="ChEBI" id="CHEBI:15378"/>
        <dbReference type="ChEBI" id="CHEBI:17319"/>
        <dbReference type="ChEBI" id="CHEBI:29034"/>
        <dbReference type="ChEBI" id="CHEBI:29919"/>
        <dbReference type="ChEBI" id="CHEBI:33722"/>
        <dbReference type="ChEBI" id="CHEBI:33737"/>
        <dbReference type="ChEBI" id="CHEBI:33738"/>
        <dbReference type="ChEBI" id="CHEBI:57844"/>
        <dbReference type="ChEBI" id="CHEBI:59789"/>
        <dbReference type="ChEBI" id="CHEBI:78809"/>
        <dbReference type="ChEBI" id="CHEBI:83100"/>
        <dbReference type="EC" id="2.8.1.8"/>
    </reaction>
</comment>
<comment type="cofactor">
    <cofactor evidence="1">
        <name>[4Fe-4S] cluster</name>
        <dbReference type="ChEBI" id="CHEBI:49883"/>
    </cofactor>
    <text evidence="1">Binds 2 [4Fe-4S] clusters per subunit. One cluster is coordinated with 3 cysteines and an exchangeable S-adenosyl-L-methionine.</text>
</comment>
<comment type="pathway">
    <text evidence="1">Protein modification; protein lipoylation via endogenous pathway; protein N(6)-(lipoyl)lysine from octanoyl-[acyl-carrier-protein]: step 2/2.</text>
</comment>
<comment type="subcellular location">
    <subcellularLocation>
        <location evidence="1">Mitochondrion</location>
    </subcellularLocation>
</comment>
<comment type="similarity">
    <text evidence="1">Belongs to the radical SAM superfamily. Lipoyl synthase family.</text>
</comment>
<proteinExistence type="inferred from homology"/>
<protein>
    <recommendedName>
        <fullName evidence="1">Lipoyl synthase, mitochondrial</fullName>
        <ecNumber evidence="1">2.8.1.8</ecNumber>
    </recommendedName>
    <alternativeName>
        <fullName evidence="1">Lipoate synthase</fullName>
        <shortName evidence="1">LS</shortName>
        <shortName evidence="1">Lip-syn</shortName>
    </alternativeName>
    <alternativeName>
        <fullName evidence="1">Lipoic acid synthase</fullName>
    </alternativeName>
</protein>
<organism>
    <name type="scientific">Laccaria bicolor (strain S238N-H82 / ATCC MYA-4686)</name>
    <name type="common">Bicoloured deceiver</name>
    <name type="synonym">Laccaria laccata var. bicolor</name>
    <dbReference type="NCBI Taxonomy" id="486041"/>
    <lineage>
        <taxon>Eukaryota</taxon>
        <taxon>Fungi</taxon>
        <taxon>Dikarya</taxon>
        <taxon>Basidiomycota</taxon>
        <taxon>Agaricomycotina</taxon>
        <taxon>Agaricomycetes</taxon>
        <taxon>Agaricomycetidae</taxon>
        <taxon>Agaricales</taxon>
        <taxon>Agaricineae</taxon>
        <taxon>Hydnangiaceae</taxon>
        <taxon>Laccaria</taxon>
    </lineage>
</organism>
<evidence type="ECO:0000255" key="1">
    <source>
        <dbReference type="HAMAP-Rule" id="MF_03123"/>
    </source>
</evidence>
<evidence type="ECO:0000255" key="2">
    <source>
        <dbReference type="PROSITE-ProRule" id="PRU01266"/>
    </source>
</evidence>
<evidence type="ECO:0000256" key="3">
    <source>
        <dbReference type="SAM" id="MobiDB-lite"/>
    </source>
</evidence>
<feature type="transit peptide" description="Mitochondrion" evidence="1">
    <location>
        <begin position="1"/>
        <end position="19"/>
    </location>
</feature>
<feature type="chain" id="PRO_0000398269" description="Lipoyl synthase, mitochondrial">
    <location>
        <begin position="20"/>
        <end position="390"/>
    </location>
</feature>
<feature type="domain" description="Radical SAM core" evidence="2">
    <location>
        <begin position="119"/>
        <end position="339"/>
    </location>
</feature>
<feature type="region of interest" description="Disordered" evidence="3">
    <location>
        <begin position="23"/>
        <end position="48"/>
    </location>
</feature>
<feature type="binding site" evidence="1">
    <location>
        <position position="98"/>
    </location>
    <ligand>
        <name>[4Fe-4S] cluster</name>
        <dbReference type="ChEBI" id="CHEBI:49883"/>
        <label>1</label>
    </ligand>
</feature>
<feature type="binding site" evidence="1">
    <location>
        <position position="103"/>
    </location>
    <ligand>
        <name>[4Fe-4S] cluster</name>
        <dbReference type="ChEBI" id="CHEBI:49883"/>
        <label>1</label>
    </ligand>
</feature>
<feature type="binding site" evidence="1">
    <location>
        <position position="109"/>
    </location>
    <ligand>
        <name>[4Fe-4S] cluster</name>
        <dbReference type="ChEBI" id="CHEBI:49883"/>
        <label>1</label>
    </ligand>
</feature>
<feature type="binding site" evidence="1">
    <location>
        <position position="136"/>
    </location>
    <ligand>
        <name>[4Fe-4S] cluster</name>
        <dbReference type="ChEBI" id="CHEBI:49883"/>
        <label>2</label>
        <note>4Fe-4S-S-AdoMet</note>
    </ligand>
</feature>
<feature type="binding site" evidence="1">
    <location>
        <position position="140"/>
    </location>
    <ligand>
        <name>[4Fe-4S] cluster</name>
        <dbReference type="ChEBI" id="CHEBI:49883"/>
        <label>2</label>
        <note>4Fe-4S-S-AdoMet</note>
    </ligand>
</feature>
<feature type="binding site" evidence="1">
    <location>
        <position position="143"/>
    </location>
    <ligand>
        <name>[4Fe-4S] cluster</name>
        <dbReference type="ChEBI" id="CHEBI:49883"/>
        <label>2</label>
        <note>4Fe-4S-S-AdoMet</note>
    </ligand>
</feature>
<feature type="binding site" evidence="1">
    <location>
        <position position="350"/>
    </location>
    <ligand>
        <name>[4Fe-4S] cluster</name>
        <dbReference type="ChEBI" id="CHEBI:49883"/>
        <label>1</label>
    </ligand>
</feature>
<keyword id="KW-0004">4Fe-4S</keyword>
<keyword id="KW-0408">Iron</keyword>
<keyword id="KW-0411">Iron-sulfur</keyword>
<keyword id="KW-0479">Metal-binding</keyword>
<keyword id="KW-0496">Mitochondrion</keyword>
<keyword id="KW-1185">Reference proteome</keyword>
<keyword id="KW-0949">S-adenosyl-L-methionine</keyword>
<keyword id="KW-0808">Transferase</keyword>
<keyword id="KW-0809">Transit peptide</keyword>
<name>LIPA_LACBS</name>
<gene>
    <name type="ORF">LACBIDRAFT_181332</name>
</gene>
<sequence length="390" mass="42676">MPTLLRILRPPRSPFTRCLATFATPSSSGSSSRSKFTESLETGPGLDDFISEEVPDRVVLGNTKGPRLPSYLKTSIPSGASFNKIKKDLRGLGLHTVCEEARCPNIGDCWGGKPGATEAEGRSAATATIMLMGDTCTRGCRFCSVKTSRTPPPLDPHEPENTAEAISRWGLGYIVLTSVDRDDLLDGGAHHFAETIRKIKYKAPQILVEALTGDFAGSLDHVSIVAQSGLDVYAHNIETVEELTPFVRDRRATFRQSLKVLEHAKKSGVRITKTSIMLGVGETKEQVLAALKELRKIDVDVVTFGQYMRPTKRHMKVDRYVEPAEFDNWKEVAENLGFLYVASGPLVRSSYKAGEFYIENVLRGKNKAIGGLGISQLEGSEKGSMTGIDR</sequence>
<reference key="1">
    <citation type="journal article" date="2008" name="Nature">
        <title>The genome of Laccaria bicolor provides insights into mycorrhizal symbiosis.</title>
        <authorList>
            <person name="Martin F."/>
            <person name="Aerts A."/>
            <person name="Ahren D."/>
            <person name="Brun A."/>
            <person name="Danchin E.G.J."/>
            <person name="Duchaussoy F."/>
            <person name="Gibon J."/>
            <person name="Kohler A."/>
            <person name="Lindquist E."/>
            <person name="Pereda V."/>
            <person name="Salamov A."/>
            <person name="Shapiro H.J."/>
            <person name="Wuyts J."/>
            <person name="Blaudez D."/>
            <person name="Buee M."/>
            <person name="Brokstein P."/>
            <person name="Canbaeck B."/>
            <person name="Cohen D."/>
            <person name="Courty P.E."/>
            <person name="Coutinho P.M."/>
            <person name="Delaruelle C."/>
            <person name="Detter J.C."/>
            <person name="Deveau A."/>
            <person name="DiFazio S."/>
            <person name="Duplessis S."/>
            <person name="Fraissinet-Tachet L."/>
            <person name="Lucic E."/>
            <person name="Frey-Klett P."/>
            <person name="Fourrey C."/>
            <person name="Feussner I."/>
            <person name="Gay G."/>
            <person name="Grimwood J."/>
            <person name="Hoegger P.J."/>
            <person name="Jain P."/>
            <person name="Kilaru S."/>
            <person name="Labbe J."/>
            <person name="Lin Y.C."/>
            <person name="Legue V."/>
            <person name="Le Tacon F."/>
            <person name="Marmeisse R."/>
            <person name="Melayah D."/>
            <person name="Montanini B."/>
            <person name="Muratet M."/>
            <person name="Nehls U."/>
            <person name="Niculita-Hirzel H."/>
            <person name="Oudot-Le Secq M.P."/>
            <person name="Peter M."/>
            <person name="Quesneville H."/>
            <person name="Rajashekar B."/>
            <person name="Reich M."/>
            <person name="Rouhier N."/>
            <person name="Schmutz J."/>
            <person name="Yin T."/>
            <person name="Chalot M."/>
            <person name="Henrissat B."/>
            <person name="Kuees U."/>
            <person name="Lucas S."/>
            <person name="Van de Peer Y."/>
            <person name="Podila G.K."/>
            <person name="Polle A."/>
            <person name="Pukkila P.J."/>
            <person name="Richardson P.M."/>
            <person name="Rouze P."/>
            <person name="Sanders I.R."/>
            <person name="Stajich J.E."/>
            <person name="Tunlid A."/>
            <person name="Tuskan G."/>
            <person name="Grigoriev I.V."/>
        </authorList>
    </citation>
    <scope>NUCLEOTIDE SEQUENCE [LARGE SCALE GENOMIC DNA]</scope>
    <source>
        <strain>S238N-H82 / ATCC MYA-4686</strain>
    </source>
</reference>
<accession>B0CQH8</accession>
<dbReference type="EC" id="2.8.1.8" evidence="1"/>
<dbReference type="EMBL" id="DS547091">
    <property type="protein sequence ID" value="EDR15648.1"/>
    <property type="molecule type" value="Genomic_DNA"/>
</dbReference>
<dbReference type="RefSeq" id="XP_001873856.1">
    <property type="nucleotide sequence ID" value="XM_001873821.1"/>
</dbReference>
<dbReference type="SMR" id="B0CQH8"/>
<dbReference type="FunCoup" id="B0CQH8">
    <property type="interactions" value="347"/>
</dbReference>
<dbReference type="STRING" id="486041.B0CQH8"/>
<dbReference type="GeneID" id="6069333"/>
<dbReference type="KEGG" id="lbc:LACBIDRAFT_181332"/>
<dbReference type="HOGENOM" id="CLU_033144_2_0_1"/>
<dbReference type="InParanoid" id="B0CQH8"/>
<dbReference type="OrthoDB" id="3231at2759"/>
<dbReference type="UniPathway" id="UPA00538">
    <property type="reaction ID" value="UER00593"/>
</dbReference>
<dbReference type="Proteomes" id="UP000001194">
    <property type="component" value="Unassembled WGS sequence"/>
</dbReference>
<dbReference type="GO" id="GO:0005739">
    <property type="term" value="C:mitochondrion"/>
    <property type="evidence" value="ECO:0007669"/>
    <property type="project" value="UniProtKB-SubCell"/>
</dbReference>
<dbReference type="GO" id="GO:0051539">
    <property type="term" value="F:4 iron, 4 sulfur cluster binding"/>
    <property type="evidence" value="ECO:0007669"/>
    <property type="project" value="UniProtKB-UniRule"/>
</dbReference>
<dbReference type="GO" id="GO:0016992">
    <property type="term" value="F:lipoate synthase activity"/>
    <property type="evidence" value="ECO:0007669"/>
    <property type="project" value="UniProtKB-UniRule"/>
</dbReference>
<dbReference type="GO" id="GO:0046872">
    <property type="term" value="F:metal ion binding"/>
    <property type="evidence" value="ECO:0007669"/>
    <property type="project" value="UniProtKB-KW"/>
</dbReference>
<dbReference type="CDD" id="cd01335">
    <property type="entry name" value="Radical_SAM"/>
    <property type="match status" value="1"/>
</dbReference>
<dbReference type="FunFam" id="3.20.20.70:FF:000036">
    <property type="entry name" value="Lipoyl synthase, mitochondrial"/>
    <property type="match status" value="1"/>
</dbReference>
<dbReference type="Gene3D" id="3.20.20.70">
    <property type="entry name" value="Aldolase class I"/>
    <property type="match status" value="1"/>
</dbReference>
<dbReference type="HAMAP" id="MF_00206">
    <property type="entry name" value="Lipoyl_synth"/>
    <property type="match status" value="1"/>
</dbReference>
<dbReference type="InterPro" id="IPR013785">
    <property type="entry name" value="Aldolase_TIM"/>
</dbReference>
<dbReference type="InterPro" id="IPR006638">
    <property type="entry name" value="Elp3/MiaA/NifB-like_rSAM"/>
</dbReference>
<dbReference type="InterPro" id="IPR031691">
    <property type="entry name" value="LIAS_N"/>
</dbReference>
<dbReference type="InterPro" id="IPR003698">
    <property type="entry name" value="Lipoyl_synth"/>
</dbReference>
<dbReference type="InterPro" id="IPR007197">
    <property type="entry name" value="rSAM"/>
</dbReference>
<dbReference type="NCBIfam" id="TIGR00510">
    <property type="entry name" value="lipA"/>
    <property type="match status" value="1"/>
</dbReference>
<dbReference type="NCBIfam" id="NF004019">
    <property type="entry name" value="PRK05481.1"/>
    <property type="match status" value="1"/>
</dbReference>
<dbReference type="NCBIfam" id="NF009544">
    <property type="entry name" value="PRK12928.1"/>
    <property type="match status" value="1"/>
</dbReference>
<dbReference type="PANTHER" id="PTHR10949">
    <property type="entry name" value="LIPOYL SYNTHASE"/>
    <property type="match status" value="1"/>
</dbReference>
<dbReference type="PANTHER" id="PTHR10949:SF0">
    <property type="entry name" value="LIPOYL SYNTHASE, MITOCHONDRIAL"/>
    <property type="match status" value="1"/>
</dbReference>
<dbReference type="Pfam" id="PF16881">
    <property type="entry name" value="LIAS_N"/>
    <property type="match status" value="1"/>
</dbReference>
<dbReference type="Pfam" id="PF04055">
    <property type="entry name" value="Radical_SAM"/>
    <property type="match status" value="1"/>
</dbReference>
<dbReference type="SFLD" id="SFLDF00271">
    <property type="entry name" value="lipoyl_synthase"/>
    <property type="match status" value="1"/>
</dbReference>
<dbReference type="SFLD" id="SFLDG01058">
    <property type="entry name" value="lipoyl_synthase_like"/>
    <property type="match status" value="1"/>
</dbReference>
<dbReference type="SMART" id="SM00729">
    <property type="entry name" value="Elp3"/>
    <property type="match status" value="1"/>
</dbReference>
<dbReference type="SUPFAM" id="SSF102114">
    <property type="entry name" value="Radical SAM enzymes"/>
    <property type="match status" value="1"/>
</dbReference>
<dbReference type="PROSITE" id="PS51918">
    <property type="entry name" value="RADICAL_SAM"/>
    <property type="match status" value="1"/>
</dbReference>